<dbReference type="EMBL" id="CP000026">
    <property type="protein sequence ID" value="AAV76111.1"/>
    <property type="molecule type" value="Genomic_DNA"/>
</dbReference>
<dbReference type="RefSeq" id="WP_001032189.1">
    <property type="nucleotide sequence ID" value="NC_006511.1"/>
</dbReference>
<dbReference type="SMR" id="Q5PIP0"/>
<dbReference type="KEGG" id="spt:SPA0077"/>
<dbReference type="HOGENOM" id="CLU_034178_0_1_6"/>
<dbReference type="UniPathway" id="UPA00117"/>
<dbReference type="Proteomes" id="UP000008185">
    <property type="component" value="Chromosome"/>
</dbReference>
<dbReference type="GO" id="GO:0009055">
    <property type="term" value="F:electron transfer activity"/>
    <property type="evidence" value="ECO:0007669"/>
    <property type="project" value="InterPro"/>
</dbReference>
<dbReference type="GO" id="GO:0050660">
    <property type="term" value="F:flavin adenine dinucleotide binding"/>
    <property type="evidence" value="ECO:0007669"/>
    <property type="project" value="InterPro"/>
</dbReference>
<dbReference type="GO" id="GO:0009437">
    <property type="term" value="P:carnitine metabolic process"/>
    <property type="evidence" value="ECO:0007669"/>
    <property type="project" value="UniProtKB-UniRule"/>
</dbReference>
<dbReference type="GO" id="GO:0033539">
    <property type="term" value="P:fatty acid beta-oxidation using acyl-CoA dehydrogenase"/>
    <property type="evidence" value="ECO:0007669"/>
    <property type="project" value="TreeGrafter"/>
</dbReference>
<dbReference type="FunFam" id="3.40.50.1220:FF:000004">
    <property type="entry name" value="Electron transfer flavoprotein"/>
    <property type="match status" value="1"/>
</dbReference>
<dbReference type="FunFam" id="3.40.50.620:FF:000067">
    <property type="entry name" value="Protein FixB"/>
    <property type="match status" value="1"/>
</dbReference>
<dbReference type="Gene3D" id="3.40.50.620">
    <property type="entry name" value="HUPs"/>
    <property type="match status" value="1"/>
</dbReference>
<dbReference type="Gene3D" id="3.40.50.1220">
    <property type="entry name" value="TPP-binding domain"/>
    <property type="match status" value="1"/>
</dbReference>
<dbReference type="HAMAP" id="MF_01056">
    <property type="entry name" value="FixB"/>
    <property type="match status" value="1"/>
</dbReference>
<dbReference type="InterPro" id="IPR029035">
    <property type="entry name" value="DHS-like_NAD/FAD-binding_dom"/>
</dbReference>
<dbReference type="InterPro" id="IPR014730">
    <property type="entry name" value="ETF_a/b_N"/>
</dbReference>
<dbReference type="InterPro" id="IPR001308">
    <property type="entry name" value="ETF_a/FixB"/>
</dbReference>
<dbReference type="InterPro" id="IPR014731">
    <property type="entry name" value="ETF_asu_C"/>
</dbReference>
<dbReference type="InterPro" id="IPR018206">
    <property type="entry name" value="ETF_asu_C_CS"/>
</dbReference>
<dbReference type="InterPro" id="IPR023461">
    <property type="entry name" value="FixB"/>
</dbReference>
<dbReference type="InterPro" id="IPR014729">
    <property type="entry name" value="Rossmann-like_a/b/a_fold"/>
</dbReference>
<dbReference type="NCBIfam" id="NF002889">
    <property type="entry name" value="PRK03363.1"/>
    <property type="match status" value="1"/>
</dbReference>
<dbReference type="PANTHER" id="PTHR43153">
    <property type="entry name" value="ELECTRON TRANSFER FLAVOPROTEIN ALPHA"/>
    <property type="match status" value="1"/>
</dbReference>
<dbReference type="PANTHER" id="PTHR43153:SF5">
    <property type="entry name" value="PROTEIN FIXB-RELATED"/>
    <property type="match status" value="1"/>
</dbReference>
<dbReference type="Pfam" id="PF01012">
    <property type="entry name" value="ETF"/>
    <property type="match status" value="1"/>
</dbReference>
<dbReference type="Pfam" id="PF00766">
    <property type="entry name" value="ETF_alpha"/>
    <property type="match status" value="1"/>
</dbReference>
<dbReference type="PIRSF" id="PIRSF000089">
    <property type="entry name" value="Electra_flavoP_a"/>
    <property type="match status" value="1"/>
</dbReference>
<dbReference type="SMART" id="SM00893">
    <property type="entry name" value="ETF"/>
    <property type="match status" value="1"/>
</dbReference>
<dbReference type="SUPFAM" id="SSF52402">
    <property type="entry name" value="Adenine nucleotide alpha hydrolases-like"/>
    <property type="match status" value="1"/>
</dbReference>
<dbReference type="SUPFAM" id="SSF52467">
    <property type="entry name" value="DHS-like NAD/FAD-binding domain"/>
    <property type="match status" value="1"/>
</dbReference>
<dbReference type="PROSITE" id="PS00696">
    <property type="entry name" value="ETF_ALPHA"/>
    <property type="match status" value="1"/>
</dbReference>
<name>FIXB_SALPA</name>
<comment type="function">
    <text evidence="1">Required for anaerobic carnitine reduction. May bring reductant to CaiA.</text>
</comment>
<comment type="pathway">
    <text evidence="1">Amine and polyamine metabolism; carnitine metabolism.</text>
</comment>
<comment type="subunit">
    <text evidence="1">Heterodimer of FixA and FixB.</text>
</comment>
<comment type="similarity">
    <text evidence="1">Belongs to the ETF alpha-subunit/FixB family.</text>
</comment>
<gene>
    <name evidence="1" type="primary">fixB</name>
    <name type="ordered locus">SPA0077</name>
</gene>
<accession>Q5PIP0</accession>
<feature type="chain" id="PRO_0000167864" description="Protein FixB">
    <location>
        <begin position="1"/>
        <end position="313"/>
    </location>
</feature>
<feature type="binding site" evidence="1">
    <location>
        <begin position="255"/>
        <end position="283"/>
    </location>
    <ligand>
        <name>FAD</name>
        <dbReference type="ChEBI" id="CHEBI:57692"/>
    </ligand>
</feature>
<proteinExistence type="inferred from homology"/>
<sequence length="313" mass="33223">MNKFSSVWVFSDTPSRLPELMSGAQAVGEKVNAFVLNEADSATACHLGADHVWLLSGKPEDRMIEDYAAAMAETIRQHSEGGAVLLPNTRRGKLLAAKLGYRLSAAVSNDASDVSLQDGKAAVKHMVYGGLAIGAETIASPFAVITLSSGTFDAQQPDASRSGEMHTVQWQAPATAVTRTATQARQSNSVDLDKARLVVSVGRGIGSKENISLAEALCQTIGAELACSRPVAENEKWMEHERYVGISNLMLKPELYLAVGISGQIQHMVGANGAQTIFAINKDKNAPIFQYADFGIVGDALKILPALTAALAR</sequence>
<organism>
    <name type="scientific">Salmonella paratyphi A (strain ATCC 9150 / SARB42)</name>
    <dbReference type="NCBI Taxonomy" id="295319"/>
    <lineage>
        <taxon>Bacteria</taxon>
        <taxon>Pseudomonadati</taxon>
        <taxon>Pseudomonadota</taxon>
        <taxon>Gammaproteobacteria</taxon>
        <taxon>Enterobacterales</taxon>
        <taxon>Enterobacteriaceae</taxon>
        <taxon>Salmonella</taxon>
    </lineage>
</organism>
<evidence type="ECO:0000255" key="1">
    <source>
        <dbReference type="HAMAP-Rule" id="MF_01056"/>
    </source>
</evidence>
<keyword id="KW-0249">Electron transport</keyword>
<keyword id="KW-0274">FAD</keyword>
<keyword id="KW-0285">Flavoprotein</keyword>
<keyword id="KW-0813">Transport</keyword>
<reference key="1">
    <citation type="journal article" date="2004" name="Nat. Genet.">
        <title>Comparison of genome degradation in Paratyphi A and Typhi, human-restricted serovars of Salmonella enterica that cause typhoid.</title>
        <authorList>
            <person name="McClelland M."/>
            <person name="Sanderson K.E."/>
            <person name="Clifton S.W."/>
            <person name="Latreille P."/>
            <person name="Porwollik S."/>
            <person name="Sabo A."/>
            <person name="Meyer R."/>
            <person name="Bieri T."/>
            <person name="Ozersky P."/>
            <person name="McLellan M."/>
            <person name="Harkins C.R."/>
            <person name="Wang C."/>
            <person name="Nguyen C."/>
            <person name="Berghoff A."/>
            <person name="Elliott G."/>
            <person name="Kohlberg S."/>
            <person name="Strong C."/>
            <person name="Du F."/>
            <person name="Carter J."/>
            <person name="Kremizki C."/>
            <person name="Layman D."/>
            <person name="Leonard S."/>
            <person name="Sun H."/>
            <person name="Fulton L."/>
            <person name="Nash W."/>
            <person name="Miner T."/>
            <person name="Minx P."/>
            <person name="Delehaunty K."/>
            <person name="Fronick C."/>
            <person name="Magrini V."/>
            <person name="Nhan M."/>
            <person name="Warren W."/>
            <person name="Florea L."/>
            <person name="Spieth J."/>
            <person name="Wilson R.K."/>
        </authorList>
    </citation>
    <scope>NUCLEOTIDE SEQUENCE [LARGE SCALE GENOMIC DNA]</scope>
    <source>
        <strain>ATCC 9150 / SARB42</strain>
    </source>
</reference>
<protein>
    <recommendedName>
        <fullName evidence="1">Protein FixB</fullName>
    </recommendedName>
</protein>